<protein>
    <recommendedName>
        <fullName evidence="2">ATP-binding protein Uup</fullName>
        <ecNumber evidence="2">3.6.1.-</ecNumber>
    </recommendedName>
</protein>
<accession>P57445</accession>
<evidence type="ECO:0000250" key="1">
    <source>
        <dbReference type="UniProtKB" id="P43672"/>
    </source>
</evidence>
<evidence type="ECO:0000255" key="2">
    <source>
        <dbReference type="HAMAP-Rule" id="MF_00848"/>
    </source>
</evidence>
<proteinExistence type="inferred from homology"/>
<organism>
    <name type="scientific">Buchnera aphidicola subsp. Acyrthosiphon pisum (strain APS)</name>
    <name type="common">Acyrthosiphon pisum symbiotic bacterium</name>
    <dbReference type="NCBI Taxonomy" id="107806"/>
    <lineage>
        <taxon>Bacteria</taxon>
        <taxon>Pseudomonadati</taxon>
        <taxon>Pseudomonadota</taxon>
        <taxon>Gammaproteobacteria</taxon>
        <taxon>Enterobacterales</taxon>
        <taxon>Erwiniaceae</taxon>
        <taxon>Buchnera</taxon>
    </lineage>
</organism>
<name>UUP_BUCAI</name>
<comment type="function">
    <text evidence="2">Probably plays a role in ribosome assembly or function. May be involved in resolution of branched DNA intermediates that result from template switching in postreplication gaps. Binds DNA and has ATPase activity.</text>
</comment>
<comment type="catalytic activity">
    <reaction evidence="2">
        <text>ATP + H2O = ADP + phosphate + H(+)</text>
        <dbReference type="Rhea" id="RHEA:13065"/>
        <dbReference type="ChEBI" id="CHEBI:15377"/>
        <dbReference type="ChEBI" id="CHEBI:15378"/>
        <dbReference type="ChEBI" id="CHEBI:30616"/>
        <dbReference type="ChEBI" id="CHEBI:43474"/>
        <dbReference type="ChEBI" id="CHEBI:456216"/>
    </reaction>
</comment>
<comment type="subcellular location">
    <subcellularLocation>
        <location evidence="2">Cytoplasm</location>
    </subcellularLocation>
    <text evidence="2">Associates with ribosomes.</text>
</comment>
<comment type="domain">
    <text evidence="1">The C-terminal domain (CTD) helps bind DNA.</text>
</comment>
<comment type="similarity">
    <text evidence="2">Belongs to the ABC transporter superfamily. ABCF family. Uup subfamily.</text>
</comment>
<gene>
    <name evidence="2" type="primary">uup</name>
    <name type="ordered locus">BU364</name>
</gene>
<keyword id="KW-0067">ATP-binding</keyword>
<keyword id="KW-0963">Cytoplasm</keyword>
<keyword id="KW-0227">DNA damage</keyword>
<keyword id="KW-0234">DNA repair</keyword>
<keyword id="KW-0238">DNA-binding</keyword>
<keyword id="KW-0378">Hydrolase</keyword>
<keyword id="KW-0547">Nucleotide-binding</keyword>
<keyword id="KW-1185">Reference proteome</keyword>
<keyword id="KW-0677">Repeat</keyword>
<dbReference type="EC" id="3.6.1.-" evidence="2"/>
<dbReference type="EMBL" id="BA000003">
    <property type="protein sequence ID" value="BAB13068.1"/>
    <property type="molecule type" value="Genomic_DNA"/>
</dbReference>
<dbReference type="RefSeq" id="NP_240182.1">
    <property type="nucleotide sequence ID" value="NC_002528.1"/>
</dbReference>
<dbReference type="RefSeq" id="WP_010896086.1">
    <property type="nucleotide sequence ID" value="NC_002528.1"/>
</dbReference>
<dbReference type="SMR" id="P57445"/>
<dbReference type="STRING" id="563178.BUAP5A_357"/>
<dbReference type="EnsemblBacteria" id="BAB13068">
    <property type="protein sequence ID" value="BAB13068"/>
    <property type="gene ID" value="BAB13068"/>
</dbReference>
<dbReference type="KEGG" id="buc:BU364"/>
<dbReference type="PATRIC" id="fig|107806.10.peg.378"/>
<dbReference type="eggNOG" id="COG0488">
    <property type="taxonomic scope" value="Bacteria"/>
</dbReference>
<dbReference type="HOGENOM" id="CLU_000604_36_0_6"/>
<dbReference type="Proteomes" id="UP000001806">
    <property type="component" value="Chromosome"/>
</dbReference>
<dbReference type="GO" id="GO:0005737">
    <property type="term" value="C:cytoplasm"/>
    <property type="evidence" value="ECO:0007669"/>
    <property type="project" value="UniProtKB-SubCell"/>
</dbReference>
<dbReference type="GO" id="GO:0005524">
    <property type="term" value="F:ATP binding"/>
    <property type="evidence" value="ECO:0007669"/>
    <property type="project" value="UniProtKB-UniRule"/>
</dbReference>
<dbReference type="GO" id="GO:0016887">
    <property type="term" value="F:ATP hydrolysis activity"/>
    <property type="evidence" value="ECO:0007669"/>
    <property type="project" value="UniProtKB-UniRule"/>
</dbReference>
<dbReference type="GO" id="GO:0003677">
    <property type="term" value="F:DNA binding"/>
    <property type="evidence" value="ECO:0007669"/>
    <property type="project" value="UniProtKB-UniRule"/>
</dbReference>
<dbReference type="GO" id="GO:0043022">
    <property type="term" value="F:ribosome binding"/>
    <property type="evidence" value="ECO:0007669"/>
    <property type="project" value="UniProtKB-UniRule"/>
</dbReference>
<dbReference type="GO" id="GO:0006281">
    <property type="term" value="P:DNA repair"/>
    <property type="evidence" value="ECO:0007669"/>
    <property type="project" value="UniProtKB-KW"/>
</dbReference>
<dbReference type="CDD" id="cd03221">
    <property type="entry name" value="ABCF_EF-3"/>
    <property type="match status" value="2"/>
</dbReference>
<dbReference type="FunFam" id="3.40.50.300:FF:000309">
    <property type="entry name" value="ABC transporter ATP-binding protein"/>
    <property type="match status" value="1"/>
</dbReference>
<dbReference type="FunFam" id="3.40.50.300:FF:000011">
    <property type="entry name" value="Putative ABC transporter ATP-binding component"/>
    <property type="match status" value="1"/>
</dbReference>
<dbReference type="Gene3D" id="3.40.50.300">
    <property type="entry name" value="P-loop containing nucleotide triphosphate hydrolases"/>
    <property type="match status" value="2"/>
</dbReference>
<dbReference type="HAMAP" id="MF_00848">
    <property type="entry name" value="Uup"/>
    <property type="match status" value="1"/>
</dbReference>
<dbReference type="InterPro" id="IPR003593">
    <property type="entry name" value="AAA+_ATPase"/>
</dbReference>
<dbReference type="InterPro" id="IPR032781">
    <property type="entry name" value="ABC_tran_Xtn"/>
</dbReference>
<dbReference type="InterPro" id="IPR003439">
    <property type="entry name" value="ABC_transporter-like_ATP-bd"/>
</dbReference>
<dbReference type="InterPro" id="IPR017871">
    <property type="entry name" value="ABC_transporter-like_CS"/>
</dbReference>
<dbReference type="InterPro" id="IPR051309">
    <property type="entry name" value="ABCF_ATPase"/>
</dbReference>
<dbReference type="InterPro" id="IPR027417">
    <property type="entry name" value="P-loop_NTPase"/>
</dbReference>
<dbReference type="InterPro" id="IPR043686">
    <property type="entry name" value="Uup"/>
</dbReference>
<dbReference type="PANTHER" id="PTHR42855">
    <property type="entry name" value="ABC TRANSPORTER ATP-BINDING SUBUNIT"/>
    <property type="match status" value="1"/>
</dbReference>
<dbReference type="PANTHER" id="PTHR42855:SF1">
    <property type="entry name" value="ABC TRANSPORTER DOMAIN-CONTAINING PROTEIN"/>
    <property type="match status" value="1"/>
</dbReference>
<dbReference type="Pfam" id="PF00005">
    <property type="entry name" value="ABC_tran"/>
    <property type="match status" value="2"/>
</dbReference>
<dbReference type="Pfam" id="PF12848">
    <property type="entry name" value="ABC_tran_Xtn"/>
    <property type="match status" value="1"/>
</dbReference>
<dbReference type="SMART" id="SM00382">
    <property type="entry name" value="AAA"/>
    <property type="match status" value="2"/>
</dbReference>
<dbReference type="SUPFAM" id="SSF52540">
    <property type="entry name" value="P-loop containing nucleoside triphosphate hydrolases"/>
    <property type="match status" value="2"/>
</dbReference>
<dbReference type="PROSITE" id="PS00211">
    <property type="entry name" value="ABC_TRANSPORTER_1"/>
    <property type="match status" value="1"/>
</dbReference>
<dbReference type="PROSITE" id="PS50893">
    <property type="entry name" value="ABC_TRANSPORTER_2"/>
    <property type="match status" value="2"/>
</dbReference>
<reference key="1">
    <citation type="journal article" date="2000" name="Nature">
        <title>Genome sequence of the endocellular bacterial symbiont of aphids Buchnera sp. APS.</title>
        <authorList>
            <person name="Shigenobu S."/>
            <person name="Watanabe H."/>
            <person name="Hattori M."/>
            <person name="Sakaki Y."/>
            <person name="Ishikawa H."/>
        </authorList>
    </citation>
    <scope>NUCLEOTIDE SEQUENCE [LARGE SCALE GENOMIC DNA]</scope>
    <source>
        <strain>APS</strain>
    </source>
</reference>
<feature type="chain" id="PRO_0000093027" description="ATP-binding protein Uup">
    <location>
        <begin position="1"/>
        <end position="596"/>
    </location>
</feature>
<feature type="domain" description="ABC transporter 1" evidence="2">
    <location>
        <begin position="1"/>
        <end position="222"/>
    </location>
</feature>
<feature type="domain" description="ABC transporter 2" evidence="2">
    <location>
        <begin position="290"/>
        <end position="516"/>
    </location>
</feature>
<feature type="region of interest" description="C-terminal domain (CTD), binds DNA" evidence="1">
    <location>
        <begin position="519"/>
        <end position="596"/>
    </location>
</feature>
<feature type="binding site" evidence="2">
    <location>
        <begin position="36"/>
        <end position="43"/>
    </location>
    <ligand>
        <name>ATP</name>
        <dbReference type="ChEBI" id="CHEBI:30616"/>
        <label>1</label>
    </ligand>
</feature>
<feature type="binding site" evidence="2">
    <location>
        <begin position="322"/>
        <end position="329"/>
    </location>
    <ligand>
        <name>ATP</name>
        <dbReference type="ChEBI" id="CHEBI:30616"/>
        <label>2</label>
    </ligand>
</feature>
<sequence>MSLINIHNASLSFSNLQILEKSTFHINKNERVCLIGKNGAGKSTLLKIINKKQDLDEGQIIYKKNTTTAYLEQNNPKNLNISIYDFIALGLKEHEKNKKKHTNEIVKIEKIIELIKLNKNTLLSHLSGGLLRKVALGRVLVREPDILLLDEPTNHLDMKTIKWLETFLKKFSGSILFVSHDRNFIQNVSTRIIDLDRGKLVSWPGDYENFIKLKNESYRIEKIQKQLFDKNLEKEEQWIRKGIKARSTRNEGRVKKLKILQKEQKDYKKIEKINNIEINQSKNYLGKIIFKLDNIDFLVNNKIIIKNFSSIIQHGDKLALIGDNGCGKSTLIKIIIGENKPQKGKIYIGKGLKISYFDQNRSFLNPNKSIIENIDYGKEKILLNSREQHIIRYLKNFLFKPNQLKSLVKTLSGGECNRLLLAQLFLKPSNVLILDEPTNDLDLDTLQLLEKIIIAYKGTVIIVSHDKTFIKNTAKKCWFFEKNGFINTHFSQYDSLKKEKNNFHKEKIQKNKSKINLAIKIKNNFKKELNAILYEIETIELDIKTLQKKVNEPDFFKKTLEEKLPTLKMLAQKERKLGKKILFWEKLEKNIINTKI</sequence>